<proteinExistence type="evidence at transcript level"/>
<gene>
    <name evidence="12" type="primary">stcO</name>
    <name type="ORF">AN7811</name>
</gene>
<feature type="chain" id="PRO_0000072258" description="Averufin oxidase stcO">
    <location>
        <begin position="1"/>
        <end position="297"/>
    </location>
</feature>
<feature type="transmembrane region" description="Helical" evidence="2">
    <location>
        <begin position="277"/>
        <end position="297"/>
    </location>
</feature>
<name>STCO_EMENI</name>
<dbReference type="EC" id="1.-.-.-" evidence="14"/>
<dbReference type="EMBL" id="U34740">
    <property type="protein sequence ID" value="AAC49201.1"/>
    <property type="molecule type" value="Genomic_DNA"/>
</dbReference>
<dbReference type="EMBL" id="AACD01000132">
    <property type="protein sequence ID" value="EAA61599.1"/>
    <property type="molecule type" value="Genomic_DNA"/>
</dbReference>
<dbReference type="EMBL" id="BN001304">
    <property type="protein sequence ID" value="CBF80154.1"/>
    <property type="molecule type" value="Genomic_DNA"/>
</dbReference>
<dbReference type="RefSeq" id="XP_681080.1">
    <property type="nucleotide sequence ID" value="XM_675988.1"/>
</dbReference>
<dbReference type="STRING" id="227321.Q00710"/>
<dbReference type="EnsemblFungi" id="CBF80154">
    <property type="protein sequence ID" value="CBF80154"/>
    <property type="gene ID" value="ANIA_07811"/>
</dbReference>
<dbReference type="KEGG" id="ani:ANIA_07811"/>
<dbReference type="VEuPathDB" id="FungiDB:AN7811"/>
<dbReference type="eggNOG" id="ENOG502SM0C">
    <property type="taxonomic scope" value="Eukaryota"/>
</dbReference>
<dbReference type="HOGENOM" id="CLU_090039_0_0_1"/>
<dbReference type="InParanoid" id="Q00710"/>
<dbReference type="OMA" id="GAAMCEI"/>
<dbReference type="OrthoDB" id="10254221at2759"/>
<dbReference type="UniPathway" id="UPA00377"/>
<dbReference type="Proteomes" id="UP000000560">
    <property type="component" value="Chromosome IV"/>
</dbReference>
<dbReference type="GO" id="GO:0016020">
    <property type="term" value="C:membrane"/>
    <property type="evidence" value="ECO:0007669"/>
    <property type="project" value="UniProtKB-SubCell"/>
</dbReference>
<dbReference type="GO" id="GO:0016646">
    <property type="term" value="F:oxidoreductase activity, acting on the CH-NH group of donors, NAD or NADP as acceptor"/>
    <property type="evidence" value="ECO:0000318"/>
    <property type="project" value="GO_Central"/>
</dbReference>
<dbReference type="GO" id="GO:0045461">
    <property type="term" value="P:sterigmatocystin biosynthetic process"/>
    <property type="evidence" value="ECO:0007669"/>
    <property type="project" value="UniProtKB-UniPathway"/>
</dbReference>
<dbReference type="Gene3D" id="3.40.50.720">
    <property type="entry name" value="NAD(P)-binding Rossmann-like Domain"/>
    <property type="match status" value="1"/>
</dbReference>
<dbReference type="InterPro" id="IPR016040">
    <property type="entry name" value="NAD(P)-bd_dom"/>
</dbReference>
<dbReference type="InterPro" id="IPR036291">
    <property type="entry name" value="NAD(P)-bd_dom_sf"/>
</dbReference>
<dbReference type="InterPro" id="IPR051606">
    <property type="entry name" value="Polyketide_Oxido-like"/>
</dbReference>
<dbReference type="PANTHER" id="PTHR43355">
    <property type="entry name" value="FLAVIN REDUCTASE (NADPH)"/>
    <property type="match status" value="1"/>
</dbReference>
<dbReference type="PANTHER" id="PTHR43355:SF2">
    <property type="entry name" value="FLAVIN REDUCTASE (NADPH)"/>
    <property type="match status" value="1"/>
</dbReference>
<dbReference type="Pfam" id="PF13460">
    <property type="entry name" value="NAD_binding_10"/>
    <property type="match status" value="1"/>
</dbReference>
<dbReference type="SUPFAM" id="SSF51735">
    <property type="entry name" value="NAD(P)-binding Rossmann-fold domains"/>
    <property type="match status" value="1"/>
</dbReference>
<keyword id="KW-0472">Membrane</keyword>
<keyword id="KW-0560">Oxidoreductase</keyword>
<keyword id="KW-1185">Reference proteome</keyword>
<keyword id="KW-0812">Transmembrane</keyword>
<keyword id="KW-1133">Transmembrane helix</keyword>
<comment type="function">
    <text evidence="1 3 4 6 7 8 9 11 14">Averufin oxidase; part of the gene cluster that mediates the biosynthesis of sterigmatocystin (ST), a polyketide-derived furanocoumarin which is part of the most toxic and carcinogenic compounds among the known mycotoxins (PubMed:8643646). The first step in the biosynthesis of sterigmatocystin is the production of hexanoate by the fatty acid synthase (FAS) units stcJ and stcK (PubMed:8962148). The polyketide backbone is assembled by the non-reducing polyketide synthase stcA by condensation of the starter hexanoyl-CoA and 7 malonyl-CoA extender units followed by cyclization and release of norsolorinic acid (By similarity). Norsolorinic acid is the first stable intermediate in the biosynthesis of sterigmatocystin and is converted into averantin (AVN) by the ketoreductase stcE which reduces the hexanoate ketone to an alcohol (Probable) (PubMed:8643646). Averantin is then oxidized into 5'-hydroxyaverantin (HAVN) by the cytochrome P450 monooxygenase stcF (PubMed:10618248). 5'-hydroxyaverantin is further converted to 5'-oxyaverantin (OAVN) by the 5'-hydroxyaverantin dehydrogenase stcG (PubMed:24957370). The next step is the conversion of OAVN into averufin (AVF) which is catalyzed by a yet to be identified enzyme (PubMed:24957370). The cytochrome P450 monooxygenase stcB and the flavin-binding monooxygenase stcW are both required for the conversion of averufin to 1-hydroxyversicolorone (PubMed:10618248). The esterase stcI probably catalyzes the formation of versiconal hemiacetal acetate from 1-hydroxyversicolorone (PubMed:24957370). The oxydoreductase stcN then probably catalyzes the biosynthetic step from versiconal to versicolorin B (VERB) (PubMed:24957370). The next step is performed by the versicolorin B desaturase stcL to produce versicolorin A (VERA) (PubMed:8999832). The ketoreductase stcU and the cytochrome P450 monooxygenase stcS are involved in the conversion of versicolorin A to demethylsterigmatocystin (PubMed:7486998). The Baeyer-Villiger oxidas stcQ and the reductase stcR might be involved in the biosynthetic step from versicolorin A to demethylsterigmatocystin (PubMed:24957370). The final step in the biosynthesis of sterigmatocystin is the methylation of demethylsterigmatocystin catalyzed by the methyltransferase stcP (PubMed:8900026).</text>
</comment>
<comment type="pathway">
    <text evidence="6">Mycotoxin biosynthesis; sterigmatocystin biosynthesis.</text>
</comment>
<comment type="subcellular location">
    <subcellularLocation>
        <location evidence="2">Membrane</location>
        <topology evidence="2">Single-pass membrane protein</topology>
    </subcellularLocation>
</comment>
<comment type="induction">
    <text evidence="5 6 10">The genes forming the sterigmatocystin biosynthesis cluster are co-regulated and induced on oatmeal porridge or the fungal isolates were grown either on oatmeal porridge or in YEC medium (0.2% yeast extract, 5.0% corn steep liquor) (PubMed:8017929, PubMed:8643646). Expression is positively regulated by the cluster-specific transcription factor aflR that binds the palindromic sequence 5'-TCG(N5)CGA-3'found in the promoter (PubMed:9680223).</text>
</comment>
<comment type="similarity">
    <text evidence="13">Belongs to the avfA family.</text>
</comment>
<organism>
    <name type="scientific">Emericella nidulans (strain FGSC A4 / ATCC 38163 / CBS 112.46 / NRRL 194 / M139)</name>
    <name type="common">Aspergillus nidulans</name>
    <dbReference type="NCBI Taxonomy" id="227321"/>
    <lineage>
        <taxon>Eukaryota</taxon>
        <taxon>Fungi</taxon>
        <taxon>Dikarya</taxon>
        <taxon>Ascomycota</taxon>
        <taxon>Pezizomycotina</taxon>
        <taxon>Eurotiomycetes</taxon>
        <taxon>Eurotiomycetidae</taxon>
        <taxon>Eurotiales</taxon>
        <taxon>Aspergillaceae</taxon>
        <taxon>Aspergillus</taxon>
        <taxon>Aspergillus subgen. Nidulantes</taxon>
    </lineage>
</organism>
<sequence length="297" mass="31719">MPSYALLGATGATGSSVLRHLLYSGSSSDLTVNVLVRSKSKLLAAFPSLDKPRPSVTSSIPTIRIFEGDSTNPDVLCAVLQDASLVFMCVAQNGSPMGTTLVQNTAAALIEARRRQAQPRGELTVIQLRSASLNPVLAVQVPRFVHRVVCFCLAAGYADLRRACVLYEAAATEGLLQYVLVDPPTLHDARGTQTTGYRLIDTTDMKDKENQRQAICLSYADLGVAMCEIASRADELHGQGVGVTATGPVRQTWAVLAGFLLEGGLGHLDYRYGRENVVVLGVCILLLLGGLLYSIKA</sequence>
<accession>Q00710</accession>
<accession>C8VDT3</accession>
<accession>Q5AV69</accession>
<protein>
    <recommendedName>
        <fullName evidence="14">Averufin oxidase stcO</fullName>
        <ecNumber evidence="14">1.-.-.-</ecNumber>
    </recommendedName>
    <alternativeName>
        <fullName evidence="12">Sterigmatocystin biosynthesis cluster protein O</fullName>
    </alternativeName>
</protein>
<evidence type="ECO:0000250" key="1">
    <source>
        <dbReference type="UniProtKB" id="Q12053"/>
    </source>
</evidence>
<evidence type="ECO:0000255" key="2"/>
<evidence type="ECO:0000269" key="3">
    <source>
    </source>
</evidence>
<evidence type="ECO:0000269" key="4">
    <source>
    </source>
</evidence>
<evidence type="ECO:0000269" key="5">
    <source>
    </source>
</evidence>
<evidence type="ECO:0000269" key="6">
    <source>
    </source>
</evidence>
<evidence type="ECO:0000269" key="7">
    <source>
    </source>
</evidence>
<evidence type="ECO:0000269" key="8">
    <source>
    </source>
</evidence>
<evidence type="ECO:0000269" key="9">
    <source>
    </source>
</evidence>
<evidence type="ECO:0000269" key="10">
    <source>
    </source>
</evidence>
<evidence type="ECO:0000303" key="11">
    <source>
    </source>
</evidence>
<evidence type="ECO:0000303" key="12">
    <source>
    </source>
</evidence>
<evidence type="ECO:0000305" key="13"/>
<evidence type="ECO:0000305" key="14">
    <source>
    </source>
</evidence>
<reference key="1">
    <citation type="journal article" date="1996" name="Proc. Natl. Acad. Sci. U.S.A.">
        <title>Twenty-five coregulated transcripts define a sterigmatocystin gene cluster in Aspergillus nidulans.</title>
        <authorList>
            <person name="Brown D.W."/>
            <person name="Yu J.-H."/>
            <person name="Kelkar H.S."/>
            <person name="Fernandes M."/>
            <person name="Nesbitt T.C."/>
            <person name="Keller N.P."/>
            <person name="Adams T.H."/>
            <person name="Leonard T.J."/>
        </authorList>
    </citation>
    <scope>NUCLEOTIDE SEQUENCE [GENOMIC DNA]</scope>
    <scope>INDUCTION</scope>
    <scope>FUNCTION</scope>
    <scope>PATHWAY</scope>
    <source>
        <strain>FGSC 26</strain>
    </source>
</reference>
<reference key="2">
    <citation type="journal article" date="2005" name="Nature">
        <title>Sequencing of Aspergillus nidulans and comparative analysis with A. fumigatus and A. oryzae.</title>
        <authorList>
            <person name="Galagan J.E."/>
            <person name="Calvo S.E."/>
            <person name="Cuomo C."/>
            <person name="Ma L.-J."/>
            <person name="Wortman J.R."/>
            <person name="Batzoglou S."/>
            <person name="Lee S.-I."/>
            <person name="Bastuerkmen M."/>
            <person name="Spevak C.C."/>
            <person name="Clutterbuck J."/>
            <person name="Kapitonov V."/>
            <person name="Jurka J."/>
            <person name="Scazzocchio C."/>
            <person name="Farman M.L."/>
            <person name="Butler J."/>
            <person name="Purcell S."/>
            <person name="Harris S."/>
            <person name="Braus G.H."/>
            <person name="Draht O."/>
            <person name="Busch S."/>
            <person name="D'Enfert C."/>
            <person name="Bouchier C."/>
            <person name="Goldman G.H."/>
            <person name="Bell-Pedersen D."/>
            <person name="Griffiths-Jones S."/>
            <person name="Doonan J.H."/>
            <person name="Yu J."/>
            <person name="Vienken K."/>
            <person name="Pain A."/>
            <person name="Freitag M."/>
            <person name="Selker E.U."/>
            <person name="Archer D.B."/>
            <person name="Penalva M.A."/>
            <person name="Oakley B.R."/>
            <person name="Momany M."/>
            <person name="Tanaka T."/>
            <person name="Kumagai T."/>
            <person name="Asai K."/>
            <person name="Machida M."/>
            <person name="Nierman W.C."/>
            <person name="Denning D.W."/>
            <person name="Caddick M.X."/>
            <person name="Hynes M."/>
            <person name="Paoletti M."/>
            <person name="Fischer R."/>
            <person name="Miller B.L."/>
            <person name="Dyer P.S."/>
            <person name="Sachs M.S."/>
            <person name="Osmani S.A."/>
            <person name="Birren B.W."/>
        </authorList>
    </citation>
    <scope>NUCLEOTIDE SEQUENCE [LARGE SCALE GENOMIC DNA]</scope>
    <source>
        <strain>FGSC A4 / ATCC 38163 / CBS 112.46 / NRRL 194 / M139</strain>
    </source>
</reference>
<reference key="3">
    <citation type="journal article" date="2009" name="Fungal Genet. Biol.">
        <title>The 2008 update of the Aspergillus nidulans genome annotation: a community effort.</title>
        <authorList>
            <person name="Wortman J.R."/>
            <person name="Gilsenan J.M."/>
            <person name="Joardar V."/>
            <person name="Deegan J."/>
            <person name="Clutterbuck J."/>
            <person name="Andersen M.R."/>
            <person name="Archer D."/>
            <person name="Bencina M."/>
            <person name="Braus G."/>
            <person name="Coutinho P."/>
            <person name="von Dohren H."/>
            <person name="Doonan J."/>
            <person name="Driessen A.J."/>
            <person name="Durek P."/>
            <person name="Espeso E."/>
            <person name="Fekete E."/>
            <person name="Flipphi M."/>
            <person name="Estrada C.G."/>
            <person name="Geysens S."/>
            <person name="Goldman G."/>
            <person name="de Groot P.W."/>
            <person name="Hansen K."/>
            <person name="Harris S.D."/>
            <person name="Heinekamp T."/>
            <person name="Helmstaedt K."/>
            <person name="Henrissat B."/>
            <person name="Hofmann G."/>
            <person name="Homan T."/>
            <person name="Horio T."/>
            <person name="Horiuchi H."/>
            <person name="James S."/>
            <person name="Jones M."/>
            <person name="Karaffa L."/>
            <person name="Karanyi Z."/>
            <person name="Kato M."/>
            <person name="Keller N."/>
            <person name="Kelly D.E."/>
            <person name="Kiel J.A."/>
            <person name="Kim J.M."/>
            <person name="van der Klei I.J."/>
            <person name="Klis F.M."/>
            <person name="Kovalchuk A."/>
            <person name="Krasevec N."/>
            <person name="Kubicek C.P."/>
            <person name="Liu B."/>
            <person name="Maccabe A."/>
            <person name="Meyer V."/>
            <person name="Mirabito P."/>
            <person name="Miskei M."/>
            <person name="Mos M."/>
            <person name="Mullins J."/>
            <person name="Nelson D.R."/>
            <person name="Nielsen J."/>
            <person name="Oakley B.R."/>
            <person name="Osmani S.A."/>
            <person name="Pakula T."/>
            <person name="Paszewski A."/>
            <person name="Paulsen I."/>
            <person name="Pilsyk S."/>
            <person name="Pocsi I."/>
            <person name="Punt P.J."/>
            <person name="Ram A.F."/>
            <person name="Ren Q."/>
            <person name="Robellet X."/>
            <person name="Robson G."/>
            <person name="Seiboth B."/>
            <person name="van Solingen P."/>
            <person name="Specht T."/>
            <person name="Sun J."/>
            <person name="Taheri-Talesh N."/>
            <person name="Takeshita N."/>
            <person name="Ussery D."/>
            <person name="vanKuyk P.A."/>
            <person name="Visser H."/>
            <person name="van de Vondervoort P.J."/>
            <person name="de Vries R.P."/>
            <person name="Walton J."/>
            <person name="Xiang X."/>
            <person name="Xiong Y."/>
            <person name="Zeng A.P."/>
            <person name="Brandt B.W."/>
            <person name="Cornell M.J."/>
            <person name="van den Hondel C.A."/>
            <person name="Visser J."/>
            <person name="Oliver S.G."/>
            <person name="Turner G."/>
        </authorList>
    </citation>
    <scope>GENOME REANNOTATION</scope>
    <source>
        <strain>FGSC A4 / ATCC 38163 / CBS 112.46 / NRRL 194 / M139</strain>
    </source>
</reference>
<reference key="4">
    <citation type="journal article" date="1994" name="Appl. Environ. Microbiol.">
        <title>Aspergillus nidulans verA is required for production of the mycotoxin sterigmatocystin.</title>
        <authorList>
            <person name="Keller N.P."/>
            <person name="Kantz N.J."/>
            <person name="Adams T.H."/>
        </authorList>
    </citation>
    <scope>FUNCTION</scope>
    <scope>INDUCTION</scope>
</reference>
<reference key="5">
    <citation type="journal article" date="1995" name="Appl. Environ. Microbiol.">
        <title>StcS, a putative P-450 monooxygenase, is required for the conversion of versicolorin A to sterigmatocystin in Aspergillus nidulans.</title>
        <authorList>
            <person name="Keller N.P."/>
            <person name="Segner S."/>
            <person name="Bhatnagar D."/>
            <person name="Adams T.H."/>
        </authorList>
    </citation>
    <scope>FUNCTION</scope>
</reference>
<reference key="6">
    <citation type="journal article" date="1995" name="J. Bacteriol.">
        <title>Sterigmatocystin biosynthesis in Aspergillus nidulans requires a novel type I polyketide synthase.</title>
        <authorList>
            <person name="Yu J.-H."/>
            <person name="Leonard T.J."/>
        </authorList>
    </citation>
    <scope>FUNCTION</scope>
    <source>
        <strain>FGSC A4 / ATCC 38163 / CBS 112.46 / NRRL 194 / M139</strain>
    </source>
</reference>
<reference key="7">
    <citation type="journal article" date="1996" name="Appl. Environ. Microbiol.">
        <title>Aspergillus nidulans stcP encodes an O-methyltransferase that is required for sterigmatocystin biosynthesis.</title>
        <authorList>
            <person name="Kelkar H.S."/>
            <person name="Keller N.P."/>
            <person name="Adams T.H."/>
        </authorList>
    </citation>
    <scope>FUNCTION</scope>
</reference>
<reference key="8">
    <citation type="journal article" date="1996" name="Proc. Natl. Acad. Sci. U.S.A.">
        <title>Aspergillus has distinct fatty acid synthases for primary and secondary metabolism.</title>
        <authorList>
            <person name="Brown D.W."/>
            <person name="Adams T.H."/>
            <person name="Keller N.P."/>
        </authorList>
    </citation>
    <scope>FUNCTION</scope>
</reference>
<reference key="9">
    <citation type="journal article" date="1997" name="J. Biol. Chem.">
        <title>Aspergillus nidulans stcL encodes a putative cytochrome P-450 monooxygenase required for bisfuran desaturation during aflatoxin/sterigmatocystin biosynthesis.</title>
        <authorList>
            <person name="Kelkar H.S."/>
            <person name="Skloss T.W."/>
            <person name="Haw J.F."/>
            <person name="Keller N.P."/>
            <person name="Adams T.H."/>
        </authorList>
    </citation>
    <scope>FUNCTION</scope>
</reference>
<reference key="10">
    <citation type="journal article" date="1998" name="Mol. Microbiol.">
        <title>Sequence-specific binding by Aspergillus nidulans aflR, a C6 zinc cluster protein regulating mycotoxin biosynthesis.</title>
        <authorList>
            <person name="Fernandes M."/>
            <person name="Keller N.P."/>
            <person name="Adams T.H."/>
        </authorList>
    </citation>
    <scope>INDUCTION</scope>
</reference>
<reference key="11">
    <citation type="journal article" date="2000" name="Appl. Environ. Microbiol.">
        <title>Requirement of monooxygenase-mediated steps for sterigmatocystin biosynthesis by Aspergillus nidulans.</title>
        <authorList>
            <person name="Keller N.P."/>
            <person name="Watanabe C.M."/>
            <person name="Kelkar H.S."/>
            <person name="Adams T.H."/>
            <person name="Townsend C.A."/>
        </authorList>
    </citation>
    <scope>FUNCTION</scope>
</reference>
<reference key="12">
    <citation type="journal article" date="2012" name="Metabolites">
        <title>Genetics of polyketide metabolism in Aspergillus nidulans.</title>
        <authorList>
            <person name="Klejnstrup M.L."/>
            <person name="Frandsen R.J."/>
            <person name="Holm D.K."/>
            <person name="Nielsen M.T."/>
            <person name="Mortensen U.H."/>
            <person name="Larsen T.O."/>
            <person name="Nielsen J.B."/>
        </authorList>
    </citation>
    <scope>REVIEW ON STERIGMATOCYSTIN BIOSYNTHESIS</scope>
</reference>